<gene>
    <name evidence="1" type="primary">dapA</name>
    <name type="ordered locus">MAP_2864c</name>
</gene>
<name>DAPA_MYCPA</name>
<accession>Q73VZ7</accession>
<keyword id="KW-0028">Amino-acid biosynthesis</keyword>
<keyword id="KW-0963">Cytoplasm</keyword>
<keyword id="KW-0220">Diaminopimelate biosynthesis</keyword>
<keyword id="KW-0456">Lyase</keyword>
<keyword id="KW-0457">Lysine biosynthesis</keyword>
<keyword id="KW-1185">Reference proteome</keyword>
<keyword id="KW-0704">Schiff base</keyword>
<protein>
    <recommendedName>
        <fullName evidence="1">4-hydroxy-tetrahydrodipicolinate synthase</fullName>
        <shortName evidence="1">HTPA synthase</shortName>
        <ecNumber evidence="1">4.3.3.7</ecNumber>
    </recommendedName>
</protein>
<reference key="1">
    <citation type="journal article" date="2005" name="Proc. Natl. Acad. Sci. U.S.A.">
        <title>The complete genome sequence of Mycobacterium avium subspecies paratuberculosis.</title>
        <authorList>
            <person name="Li L."/>
            <person name="Bannantine J.P."/>
            <person name="Zhang Q."/>
            <person name="Amonsin A."/>
            <person name="May B.J."/>
            <person name="Alt D."/>
            <person name="Banerji N."/>
            <person name="Kanjilal S."/>
            <person name="Kapur V."/>
        </authorList>
    </citation>
    <scope>NUCLEOTIDE SEQUENCE [LARGE SCALE GENOMIC DNA]</scope>
    <source>
        <strain>ATCC BAA-968 / K-10</strain>
    </source>
</reference>
<feature type="chain" id="PRO_1000124051" description="4-hydroxy-tetrahydrodipicolinate synthase">
    <location>
        <begin position="1"/>
        <end position="300"/>
    </location>
</feature>
<feature type="active site" description="Proton donor/acceptor" evidence="1">
    <location>
        <position position="143"/>
    </location>
</feature>
<feature type="active site" description="Schiff-base intermediate with substrate" evidence="1">
    <location>
        <position position="171"/>
    </location>
</feature>
<feature type="binding site" evidence="1">
    <location>
        <position position="55"/>
    </location>
    <ligand>
        <name>pyruvate</name>
        <dbReference type="ChEBI" id="CHEBI:15361"/>
    </ligand>
</feature>
<feature type="binding site" evidence="1">
    <location>
        <position position="211"/>
    </location>
    <ligand>
        <name>pyruvate</name>
        <dbReference type="ChEBI" id="CHEBI:15361"/>
    </ligand>
</feature>
<feature type="site" description="Part of a proton relay during catalysis" evidence="1">
    <location>
        <position position="54"/>
    </location>
</feature>
<feature type="site" description="Part of a proton relay during catalysis" evidence="1">
    <location>
        <position position="117"/>
    </location>
</feature>
<comment type="function">
    <text evidence="1">Catalyzes the condensation of (S)-aspartate-beta-semialdehyde [(S)-ASA] and pyruvate to 4-hydroxy-tetrahydrodipicolinate (HTPA).</text>
</comment>
<comment type="catalytic activity">
    <reaction evidence="1">
        <text>L-aspartate 4-semialdehyde + pyruvate = (2S,4S)-4-hydroxy-2,3,4,5-tetrahydrodipicolinate + H2O + H(+)</text>
        <dbReference type="Rhea" id="RHEA:34171"/>
        <dbReference type="ChEBI" id="CHEBI:15361"/>
        <dbReference type="ChEBI" id="CHEBI:15377"/>
        <dbReference type="ChEBI" id="CHEBI:15378"/>
        <dbReference type="ChEBI" id="CHEBI:67139"/>
        <dbReference type="ChEBI" id="CHEBI:537519"/>
        <dbReference type="EC" id="4.3.3.7"/>
    </reaction>
</comment>
<comment type="pathway">
    <text evidence="1">Amino-acid biosynthesis; L-lysine biosynthesis via DAP pathway; (S)-tetrahydrodipicolinate from L-aspartate: step 3/4.</text>
</comment>
<comment type="subunit">
    <text evidence="1">Homotetramer; dimer of dimers.</text>
</comment>
<comment type="subcellular location">
    <subcellularLocation>
        <location evidence="1">Cytoplasm</location>
    </subcellularLocation>
</comment>
<comment type="similarity">
    <text evidence="1">Belongs to the DapA family.</text>
</comment>
<comment type="caution">
    <text evidence="2">Was originally thought to be a dihydrodipicolinate synthase (DHDPS), catalyzing the condensation of (S)-aspartate-beta-semialdehyde [(S)-ASA] and pyruvate to dihydrodipicolinate (DHDP). However, it was shown in E.coli that the product of the enzymatic reaction is not dihydrodipicolinate but in fact (4S)-4-hydroxy-2,3,4,5-tetrahydro-(2S)-dipicolinic acid (HTPA), and that the consecutive dehydration reaction leading to DHDP is not spontaneous but catalyzed by DapB.</text>
</comment>
<proteinExistence type="inferred from homology"/>
<evidence type="ECO:0000255" key="1">
    <source>
        <dbReference type="HAMAP-Rule" id="MF_00418"/>
    </source>
</evidence>
<evidence type="ECO:0000305" key="2"/>
<dbReference type="EC" id="4.3.3.7" evidence="1"/>
<dbReference type="EMBL" id="AE016958">
    <property type="protein sequence ID" value="AAS05181.1"/>
    <property type="molecule type" value="Genomic_DNA"/>
</dbReference>
<dbReference type="RefSeq" id="WP_003875193.1">
    <property type="nucleotide sequence ID" value="NZ_CP106873.1"/>
</dbReference>
<dbReference type="SMR" id="Q73VZ7"/>
<dbReference type="STRING" id="262316.MAP_2864c"/>
<dbReference type="KEGG" id="mpa:MAP_2864c"/>
<dbReference type="PATRIC" id="fig|262316.17.peg.3034"/>
<dbReference type="eggNOG" id="COG0329">
    <property type="taxonomic scope" value="Bacteria"/>
</dbReference>
<dbReference type="HOGENOM" id="CLU_049343_7_1_11"/>
<dbReference type="UniPathway" id="UPA00034">
    <property type="reaction ID" value="UER00017"/>
</dbReference>
<dbReference type="Proteomes" id="UP000000580">
    <property type="component" value="Chromosome"/>
</dbReference>
<dbReference type="GO" id="GO:0005829">
    <property type="term" value="C:cytosol"/>
    <property type="evidence" value="ECO:0007669"/>
    <property type="project" value="TreeGrafter"/>
</dbReference>
<dbReference type="GO" id="GO:0008840">
    <property type="term" value="F:4-hydroxy-tetrahydrodipicolinate synthase activity"/>
    <property type="evidence" value="ECO:0007669"/>
    <property type="project" value="UniProtKB-UniRule"/>
</dbReference>
<dbReference type="GO" id="GO:0019877">
    <property type="term" value="P:diaminopimelate biosynthetic process"/>
    <property type="evidence" value="ECO:0007669"/>
    <property type="project" value="UniProtKB-UniRule"/>
</dbReference>
<dbReference type="GO" id="GO:0009089">
    <property type="term" value="P:lysine biosynthetic process via diaminopimelate"/>
    <property type="evidence" value="ECO:0007669"/>
    <property type="project" value="UniProtKB-UniRule"/>
</dbReference>
<dbReference type="CDD" id="cd00950">
    <property type="entry name" value="DHDPS"/>
    <property type="match status" value="1"/>
</dbReference>
<dbReference type="Gene3D" id="3.20.20.70">
    <property type="entry name" value="Aldolase class I"/>
    <property type="match status" value="1"/>
</dbReference>
<dbReference type="HAMAP" id="MF_00418">
    <property type="entry name" value="DapA"/>
    <property type="match status" value="1"/>
</dbReference>
<dbReference type="InterPro" id="IPR013785">
    <property type="entry name" value="Aldolase_TIM"/>
</dbReference>
<dbReference type="InterPro" id="IPR005263">
    <property type="entry name" value="DapA"/>
</dbReference>
<dbReference type="InterPro" id="IPR002220">
    <property type="entry name" value="DapA-like"/>
</dbReference>
<dbReference type="InterPro" id="IPR020625">
    <property type="entry name" value="Schiff_base-form_aldolases_AS"/>
</dbReference>
<dbReference type="InterPro" id="IPR020624">
    <property type="entry name" value="Schiff_base-form_aldolases_CS"/>
</dbReference>
<dbReference type="NCBIfam" id="TIGR00674">
    <property type="entry name" value="dapA"/>
    <property type="match status" value="1"/>
</dbReference>
<dbReference type="PANTHER" id="PTHR12128:SF66">
    <property type="entry name" value="4-HYDROXY-2-OXOGLUTARATE ALDOLASE, MITOCHONDRIAL"/>
    <property type="match status" value="1"/>
</dbReference>
<dbReference type="PANTHER" id="PTHR12128">
    <property type="entry name" value="DIHYDRODIPICOLINATE SYNTHASE"/>
    <property type="match status" value="1"/>
</dbReference>
<dbReference type="Pfam" id="PF00701">
    <property type="entry name" value="DHDPS"/>
    <property type="match status" value="1"/>
</dbReference>
<dbReference type="PIRSF" id="PIRSF001365">
    <property type="entry name" value="DHDPS"/>
    <property type="match status" value="1"/>
</dbReference>
<dbReference type="PRINTS" id="PR00146">
    <property type="entry name" value="DHPICSNTHASE"/>
</dbReference>
<dbReference type="SMART" id="SM01130">
    <property type="entry name" value="DHDPS"/>
    <property type="match status" value="1"/>
</dbReference>
<dbReference type="SUPFAM" id="SSF51569">
    <property type="entry name" value="Aldolase"/>
    <property type="match status" value="1"/>
</dbReference>
<dbReference type="PROSITE" id="PS00665">
    <property type="entry name" value="DHDPS_1"/>
    <property type="match status" value="1"/>
</dbReference>
<dbReference type="PROSITE" id="PS00666">
    <property type="entry name" value="DHDPS_2"/>
    <property type="match status" value="1"/>
</dbReference>
<sequence length="300" mass="30973">MSTVGFDAPARLGTVLTAMVTPFAADGSLDTAAAARLANHLVDSGCDGLVVSGTTGESPTTTDDEKRELLRVVLEAVGDRARVIAGAGTYDTAHSVRLAKACAAEGAHGLLVVTPYYSKPPQRGLIAHFTAVADATELPVLLYDIPGRSVVPIESSTIRALASHPNIVGVKDAKADLHAGGQIIAETGLAYYSGDDALNLPWLAMGATGFISVISHVAANQLRELLSAFTSGDIATARKINATVTPLCDAMARLGGVTMSKAGLRLQGIDVGDPRLPQVPATPEQIEALTADMRAASVLR</sequence>
<organism>
    <name type="scientific">Mycolicibacterium paratuberculosis (strain ATCC BAA-968 / K-10)</name>
    <name type="common">Mycobacterium paratuberculosis</name>
    <dbReference type="NCBI Taxonomy" id="262316"/>
    <lineage>
        <taxon>Bacteria</taxon>
        <taxon>Bacillati</taxon>
        <taxon>Actinomycetota</taxon>
        <taxon>Actinomycetes</taxon>
        <taxon>Mycobacteriales</taxon>
        <taxon>Mycobacteriaceae</taxon>
        <taxon>Mycobacterium</taxon>
        <taxon>Mycobacterium avium complex (MAC)</taxon>
    </lineage>
</organism>